<gene>
    <name type="primary">aruI</name>
    <name type="ordered locus">PA4977</name>
</gene>
<accession>Q9HUI8</accession>
<proteinExistence type="evidence at protein level"/>
<evidence type="ECO:0000250" key="1"/>
<evidence type="ECO:0000269" key="2">
    <source>
    </source>
</evidence>
<evidence type="ECO:0000305" key="3"/>
<evidence type="ECO:0000305" key="4">
    <source>
    </source>
</evidence>
<keyword id="KW-0056">Arginine metabolism</keyword>
<keyword id="KW-0456">Lyase</keyword>
<keyword id="KW-1185">Reference proteome</keyword>
<keyword id="KW-0786">Thiamine pyrophosphate</keyword>
<name>ARUI_PSEAE</name>
<comment type="function">
    <text evidence="4">Catalyzes the decarboxylation of 2-ketoarginine, leading to the formation of 4-guanidinobutyraldehyde.</text>
</comment>
<comment type="catalytic activity">
    <reaction>
        <text>5-guanidino-2-oxopentanoate + H(+) = 4-guanidinobutanal + CO2</text>
        <dbReference type="Rhea" id="RHEA:11340"/>
        <dbReference type="ChEBI" id="CHEBI:15378"/>
        <dbReference type="ChEBI" id="CHEBI:16526"/>
        <dbReference type="ChEBI" id="CHEBI:57854"/>
        <dbReference type="ChEBI" id="CHEBI:58489"/>
        <dbReference type="EC" id="4.1.1.75"/>
    </reaction>
</comment>
<comment type="cofactor">
    <cofactor evidence="1">
        <name>thiamine diphosphate</name>
        <dbReference type="ChEBI" id="CHEBI:58937"/>
    </cofactor>
    <text evidence="1">Binds 1 thiamine pyrophosphate per subunit.</text>
</comment>
<comment type="pathway">
    <text evidence="2">Amino-acid degradation; L-arginine degradation.</text>
</comment>
<comment type="induction">
    <text evidence="2">Induced by L-arginine in the absence of ArgR, via the AruR/AruS two-component regulatory system.</text>
</comment>
<comment type="similarity">
    <text evidence="3">Belongs to the TPP enzyme family.</text>
</comment>
<feature type="chain" id="PRO_0000418391" description="Probable 2-ketoarginine decarboxylase AruI">
    <location>
        <begin position="1"/>
        <end position="559"/>
    </location>
</feature>
<feature type="binding site" evidence="1">
    <location>
        <position position="76"/>
    </location>
    <ligand>
        <name>thiamine diphosphate</name>
        <dbReference type="ChEBI" id="CHEBI:58937"/>
    </ligand>
</feature>
<reference key="1">
    <citation type="journal article" date="2000" name="Nature">
        <title>Complete genome sequence of Pseudomonas aeruginosa PAO1, an opportunistic pathogen.</title>
        <authorList>
            <person name="Stover C.K."/>
            <person name="Pham X.-Q.T."/>
            <person name="Erwin A.L."/>
            <person name="Mizoguchi S.D."/>
            <person name="Warrener P."/>
            <person name="Hickey M.J."/>
            <person name="Brinkman F.S.L."/>
            <person name="Hufnagle W.O."/>
            <person name="Kowalik D.J."/>
            <person name="Lagrou M."/>
            <person name="Garber R.L."/>
            <person name="Goltry L."/>
            <person name="Tolentino E."/>
            <person name="Westbrock-Wadman S."/>
            <person name="Yuan Y."/>
            <person name="Brody L.L."/>
            <person name="Coulter S.N."/>
            <person name="Folger K.R."/>
            <person name="Kas A."/>
            <person name="Larbig K."/>
            <person name="Lim R.M."/>
            <person name="Smith K.A."/>
            <person name="Spencer D.H."/>
            <person name="Wong G.K.-S."/>
            <person name="Wu Z."/>
            <person name="Paulsen I.T."/>
            <person name="Reizer J."/>
            <person name="Saier M.H. Jr."/>
            <person name="Hancock R.E.W."/>
            <person name="Lory S."/>
            <person name="Olson M.V."/>
        </authorList>
    </citation>
    <scope>NUCLEOTIDE SEQUENCE [LARGE SCALE GENOMIC DNA]</scope>
    <source>
        <strain>ATCC 15692 / DSM 22644 / CIP 104116 / JCM 14847 / LMG 12228 / 1C / PRS 101 / PAO1</strain>
    </source>
</reference>
<reference key="2">
    <citation type="journal article" date="2007" name="J. Bacteriol.">
        <title>Functional genomics enables identification of genes of the arginine transaminase pathway in Pseudomonas aeruginosa.</title>
        <authorList>
            <person name="Yang Z."/>
            <person name="Lu C.D."/>
        </authorList>
    </citation>
    <scope>FUNCTION IN ARGININE DEGRADATION</scope>
    <scope>PATHWAY</scope>
    <scope>INDUCTION</scope>
    <scope>GENE NAME</scope>
    <source>
        <strain>ATCC 15692 / DSM 22644 / CIP 104116 / JCM 14847 / LMG 12228 / 1C / PRS 101 / PAO1</strain>
    </source>
</reference>
<organism>
    <name type="scientific">Pseudomonas aeruginosa (strain ATCC 15692 / DSM 22644 / CIP 104116 / JCM 14847 / LMG 12228 / 1C / PRS 101 / PAO1)</name>
    <dbReference type="NCBI Taxonomy" id="208964"/>
    <lineage>
        <taxon>Bacteria</taxon>
        <taxon>Pseudomonadati</taxon>
        <taxon>Pseudomonadota</taxon>
        <taxon>Gammaproteobacteria</taxon>
        <taxon>Pseudomonadales</taxon>
        <taxon>Pseudomonadaceae</taxon>
        <taxon>Pseudomonas</taxon>
    </lineage>
</organism>
<sequence length="559" mass="59402">MGARALRRERRLRWSPNWTRILPMQPQKTLTAGQALVRLLANYGVDTVFGIPGVHTLELYRGLPGSGIRHVLTRHEQGAGFMADGYARVSGKPGVCFVITGPGVTNVATAIGQAYADSVPLLVISSVNHSASLGKGWGCLHETQDQRAMTAPITAFSALALSPEQLPELIARAYAVFDSERPRPVHISIPLDVLAAPVAHDWSAAVARRPGRGVPCSEALRAAAERLAAARRPMLIAGGGALAAGEALAALSERLAAPLFTSVAGKGLLPPDAPLNAGASLCVAPGWEMIAEADLVLAVGTEMADTDFWRERLPLSGELIRVDIDPRKFNDFYPSAVALRGDARQTLEALLVRLPQEARDSAPAAARVARLRAEIRAAHAPLQALHQAILDRIAAALPADAFVSTDMTQLAYTGNYAFASRAPRSWLHPTGYGTLGYGLPAGIGAKLGAPQRPGLVLVGDGGFLYTAQELATASEELDSPLVVLLWNNDALGQIRDDMLGLDIEPVGVLPRNPDFALLGRAYGCAVRQPQDLDELERDLRAGFGQSGVTLIELRHACAR</sequence>
<protein>
    <recommendedName>
        <fullName>Probable 2-ketoarginine decarboxylase AruI</fullName>
        <ecNumber>4.1.1.75</ecNumber>
    </recommendedName>
    <alternativeName>
        <fullName>2-oxo-5-guanidinopentanoate decarboxylase</fullName>
    </alternativeName>
    <alternativeName>
        <fullName>5-guanidino-2-oxopentanoate decarboxylase</fullName>
    </alternativeName>
</protein>
<dbReference type="EC" id="4.1.1.75"/>
<dbReference type="EMBL" id="AE004091">
    <property type="protein sequence ID" value="AAG08362.1"/>
    <property type="molecule type" value="Genomic_DNA"/>
</dbReference>
<dbReference type="PIR" id="G83024">
    <property type="entry name" value="G83024"/>
</dbReference>
<dbReference type="RefSeq" id="NP_253664.1">
    <property type="nucleotide sequence ID" value="NC_002516.2"/>
</dbReference>
<dbReference type="RefSeq" id="WP_010895690.1">
    <property type="nucleotide sequence ID" value="NZ_QZGE01000002.1"/>
</dbReference>
<dbReference type="SMR" id="Q9HUI8"/>
<dbReference type="STRING" id="208964.PA4977"/>
<dbReference type="PaxDb" id="208964-PA4977"/>
<dbReference type="GeneID" id="880189"/>
<dbReference type="KEGG" id="pae:PA4977"/>
<dbReference type="PATRIC" id="fig|208964.12.peg.5213"/>
<dbReference type="PseudoCAP" id="PA4977"/>
<dbReference type="HOGENOM" id="CLU_013748_3_1_6"/>
<dbReference type="InParanoid" id="Q9HUI8"/>
<dbReference type="OrthoDB" id="9785953at2"/>
<dbReference type="PhylomeDB" id="Q9HUI8"/>
<dbReference type="BioCyc" id="MetaCyc:MONOMER-13584"/>
<dbReference type="BioCyc" id="PAER208964:G1FZ6-5093-MONOMER"/>
<dbReference type="UniPathway" id="UPA00073"/>
<dbReference type="Proteomes" id="UP000002438">
    <property type="component" value="Chromosome"/>
</dbReference>
<dbReference type="GO" id="GO:0005948">
    <property type="term" value="C:acetolactate synthase complex"/>
    <property type="evidence" value="ECO:0000318"/>
    <property type="project" value="GO_Central"/>
</dbReference>
<dbReference type="GO" id="GO:0047435">
    <property type="term" value="F:5-guanidino-2-oxopentanoate decarboxylase activity"/>
    <property type="evidence" value="ECO:0007669"/>
    <property type="project" value="UniProtKB-EC"/>
</dbReference>
<dbReference type="GO" id="GO:0003984">
    <property type="term" value="F:acetolactate synthase activity"/>
    <property type="evidence" value="ECO:0000318"/>
    <property type="project" value="GO_Central"/>
</dbReference>
<dbReference type="GO" id="GO:0050660">
    <property type="term" value="F:flavin adenine dinucleotide binding"/>
    <property type="evidence" value="ECO:0000318"/>
    <property type="project" value="GO_Central"/>
</dbReference>
<dbReference type="GO" id="GO:0000287">
    <property type="term" value="F:magnesium ion binding"/>
    <property type="evidence" value="ECO:0007669"/>
    <property type="project" value="InterPro"/>
</dbReference>
<dbReference type="GO" id="GO:0030976">
    <property type="term" value="F:thiamine pyrophosphate binding"/>
    <property type="evidence" value="ECO:0007669"/>
    <property type="project" value="InterPro"/>
</dbReference>
<dbReference type="GO" id="GO:0019545">
    <property type="term" value="P:arginine catabolic process to succinate"/>
    <property type="evidence" value="ECO:0000315"/>
    <property type="project" value="UniProtKB"/>
</dbReference>
<dbReference type="GO" id="GO:0009097">
    <property type="term" value="P:isoleucine biosynthetic process"/>
    <property type="evidence" value="ECO:0000318"/>
    <property type="project" value="GO_Central"/>
</dbReference>
<dbReference type="GO" id="GO:0009099">
    <property type="term" value="P:L-valine biosynthetic process"/>
    <property type="evidence" value="ECO:0000318"/>
    <property type="project" value="GO_Central"/>
</dbReference>
<dbReference type="CDD" id="cd00568">
    <property type="entry name" value="TPP_enzymes"/>
    <property type="match status" value="1"/>
</dbReference>
<dbReference type="CDD" id="cd07035">
    <property type="entry name" value="TPP_PYR_POX_like"/>
    <property type="match status" value="1"/>
</dbReference>
<dbReference type="FunFam" id="3.40.50.970:FF:000084">
    <property type="entry name" value="Probable 2-ketoarginine decarboxylase AruI"/>
    <property type="match status" value="1"/>
</dbReference>
<dbReference type="Gene3D" id="3.40.50.970">
    <property type="match status" value="2"/>
</dbReference>
<dbReference type="Gene3D" id="3.40.50.1220">
    <property type="entry name" value="TPP-binding domain"/>
    <property type="match status" value="1"/>
</dbReference>
<dbReference type="InterPro" id="IPR029035">
    <property type="entry name" value="DHS-like_NAD/FAD-binding_dom"/>
</dbReference>
<dbReference type="InterPro" id="IPR029061">
    <property type="entry name" value="THDP-binding"/>
</dbReference>
<dbReference type="InterPro" id="IPR012000">
    <property type="entry name" value="Thiamin_PyroP_enz_cen_dom"/>
</dbReference>
<dbReference type="InterPro" id="IPR012001">
    <property type="entry name" value="Thiamin_PyroP_enz_TPP-bd_dom"/>
</dbReference>
<dbReference type="InterPro" id="IPR000399">
    <property type="entry name" value="TPP-bd_CS"/>
</dbReference>
<dbReference type="InterPro" id="IPR045229">
    <property type="entry name" value="TPP_enz"/>
</dbReference>
<dbReference type="InterPro" id="IPR011766">
    <property type="entry name" value="TPP_enzyme_TPP-bd"/>
</dbReference>
<dbReference type="NCBIfam" id="NF005712">
    <property type="entry name" value="PRK07524.1"/>
    <property type="match status" value="1"/>
</dbReference>
<dbReference type="PANTHER" id="PTHR18968:SF13">
    <property type="entry name" value="ACETOLACTATE SYNTHASE CATALYTIC SUBUNIT, MITOCHONDRIAL"/>
    <property type="match status" value="1"/>
</dbReference>
<dbReference type="PANTHER" id="PTHR18968">
    <property type="entry name" value="THIAMINE PYROPHOSPHATE ENZYMES"/>
    <property type="match status" value="1"/>
</dbReference>
<dbReference type="Pfam" id="PF02775">
    <property type="entry name" value="TPP_enzyme_C"/>
    <property type="match status" value="1"/>
</dbReference>
<dbReference type="Pfam" id="PF00205">
    <property type="entry name" value="TPP_enzyme_M"/>
    <property type="match status" value="1"/>
</dbReference>
<dbReference type="Pfam" id="PF02776">
    <property type="entry name" value="TPP_enzyme_N"/>
    <property type="match status" value="1"/>
</dbReference>
<dbReference type="SUPFAM" id="SSF52467">
    <property type="entry name" value="DHS-like NAD/FAD-binding domain"/>
    <property type="match status" value="1"/>
</dbReference>
<dbReference type="SUPFAM" id="SSF52518">
    <property type="entry name" value="Thiamin diphosphate-binding fold (THDP-binding)"/>
    <property type="match status" value="2"/>
</dbReference>
<dbReference type="PROSITE" id="PS00187">
    <property type="entry name" value="TPP_ENZYMES"/>
    <property type="match status" value="1"/>
</dbReference>